<accession>Q8F142</accession>
<keyword id="KW-0067">ATP-binding</keyword>
<keyword id="KW-0963">Cytoplasm</keyword>
<keyword id="KW-0418">Kinase</keyword>
<keyword id="KW-0547">Nucleotide-binding</keyword>
<keyword id="KW-0665">Pyrimidine biosynthesis</keyword>
<keyword id="KW-1185">Reference proteome</keyword>
<keyword id="KW-0808">Transferase</keyword>
<organism>
    <name type="scientific">Leptospira interrogans serogroup Icterohaemorrhagiae serovar Lai (strain 56601)</name>
    <dbReference type="NCBI Taxonomy" id="189518"/>
    <lineage>
        <taxon>Bacteria</taxon>
        <taxon>Pseudomonadati</taxon>
        <taxon>Spirochaetota</taxon>
        <taxon>Spirochaetia</taxon>
        <taxon>Leptospirales</taxon>
        <taxon>Leptospiraceae</taxon>
        <taxon>Leptospira</taxon>
    </lineage>
</organism>
<sequence>MATEAKYNRILIKLSGEALAGEGEFGIDTNKAHSLAEEIKEVHDLGVEIALVVGGGNIIRGTNLAKAGIDRATADYMGMLATIQNALALQDACEKKGLYTRVQSAIEINSIAESYIRRRAVRHLEKRRIVIFAGGTGNPYFTTDTTASLRAVEVGCDVILKATKVDGVYTADPKKDNGAKRYSQISFMESINRRLKVMDSTALSLCMENNMSIIVFDIFKRGNLKDLVTGKNIGTLISNSEDIQIDGK</sequence>
<protein>
    <recommendedName>
        <fullName evidence="1">Uridylate kinase</fullName>
        <shortName evidence="1">UK</shortName>
        <ecNumber evidence="1">2.7.4.22</ecNumber>
    </recommendedName>
    <alternativeName>
        <fullName evidence="1">Uridine monophosphate kinase</fullName>
        <shortName evidence="1">UMP kinase</shortName>
        <shortName evidence="1">UMPK</shortName>
    </alternativeName>
</protein>
<proteinExistence type="inferred from homology"/>
<feature type="chain" id="PRO_0000143855" description="Uridylate kinase">
    <location>
        <begin position="1"/>
        <end position="248"/>
    </location>
</feature>
<feature type="binding site" evidence="1">
    <location>
        <begin position="13"/>
        <end position="16"/>
    </location>
    <ligand>
        <name>ATP</name>
        <dbReference type="ChEBI" id="CHEBI:30616"/>
    </ligand>
</feature>
<feature type="binding site" evidence="1">
    <location>
        <position position="55"/>
    </location>
    <ligand>
        <name>UMP</name>
        <dbReference type="ChEBI" id="CHEBI:57865"/>
    </ligand>
</feature>
<feature type="binding site" evidence="1">
    <location>
        <position position="56"/>
    </location>
    <ligand>
        <name>ATP</name>
        <dbReference type="ChEBI" id="CHEBI:30616"/>
    </ligand>
</feature>
<feature type="binding site" evidence="1">
    <location>
        <position position="60"/>
    </location>
    <ligand>
        <name>ATP</name>
        <dbReference type="ChEBI" id="CHEBI:30616"/>
    </ligand>
</feature>
<feature type="binding site" evidence="1">
    <location>
        <position position="75"/>
    </location>
    <ligand>
        <name>UMP</name>
        <dbReference type="ChEBI" id="CHEBI:57865"/>
    </ligand>
</feature>
<feature type="binding site" evidence="1">
    <location>
        <begin position="136"/>
        <end position="143"/>
    </location>
    <ligand>
        <name>UMP</name>
        <dbReference type="ChEBI" id="CHEBI:57865"/>
    </ligand>
</feature>
<feature type="binding site" evidence="1">
    <location>
        <position position="163"/>
    </location>
    <ligand>
        <name>ATP</name>
        <dbReference type="ChEBI" id="CHEBI:30616"/>
    </ligand>
</feature>
<feature type="binding site" evidence="1">
    <location>
        <position position="169"/>
    </location>
    <ligand>
        <name>ATP</name>
        <dbReference type="ChEBI" id="CHEBI:30616"/>
    </ligand>
</feature>
<feature type="binding site" evidence="1">
    <location>
        <position position="172"/>
    </location>
    <ligand>
        <name>ATP</name>
        <dbReference type="ChEBI" id="CHEBI:30616"/>
    </ligand>
</feature>
<dbReference type="EC" id="2.7.4.22" evidence="1"/>
<dbReference type="EMBL" id="AE010300">
    <property type="protein sequence ID" value="AAN50494.1"/>
    <property type="molecule type" value="Genomic_DNA"/>
</dbReference>
<dbReference type="RefSeq" id="NP_713476.1">
    <property type="nucleotide sequence ID" value="NC_004342.2"/>
</dbReference>
<dbReference type="RefSeq" id="WP_000179852.1">
    <property type="nucleotide sequence ID" value="NC_004342.2"/>
</dbReference>
<dbReference type="SMR" id="Q8F142"/>
<dbReference type="FunCoup" id="Q8F142">
    <property type="interactions" value="534"/>
</dbReference>
<dbReference type="STRING" id="189518.LA_3296"/>
<dbReference type="PaxDb" id="189518-LA_3296"/>
<dbReference type="EnsemblBacteria" id="AAN50494">
    <property type="protein sequence ID" value="AAN50494"/>
    <property type="gene ID" value="LA_3296"/>
</dbReference>
<dbReference type="GeneID" id="61144184"/>
<dbReference type="KEGG" id="lil:LA_3296"/>
<dbReference type="PATRIC" id="fig|189518.3.peg.3266"/>
<dbReference type="HOGENOM" id="CLU_033861_0_0_12"/>
<dbReference type="InParanoid" id="Q8F142"/>
<dbReference type="OrthoDB" id="9807458at2"/>
<dbReference type="UniPathway" id="UPA00159">
    <property type="reaction ID" value="UER00275"/>
</dbReference>
<dbReference type="PRO" id="PR:Q8F142"/>
<dbReference type="Proteomes" id="UP000001408">
    <property type="component" value="Chromosome I"/>
</dbReference>
<dbReference type="GO" id="GO:0005737">
    <property type="term" value="C:cytoplasm"/>
    <property type="evidence" value="ECO:0007669"/>
    <property type="project" value="UniProtKB-SubCell"/>
</dbReference>
<dbReference type="GO" id="GO:0005524">
    <property type="term" value="F:ATP binding"/>
    <property type="evidence" value="ECO:0007669"/>
    <property type="project" value="UniProtKB-KW"/>
</dbReference>
<dbReference type="GO" id="GO:0033862">
    <property type="term" value="F:UMP kinase activity"/>
    <property type="evidence" value="ECO:0000318"/>
    <property type="project" value="GO_Central"/>
</dbReference>
<dbReference type="GO" id="GO:0044210">
    <property type="term" value="P:'de novo' CTP biosynthetic process"/>
    <property type="evidence" value="ECO:0007669"/>
    <property type="project" value="UniProtKB-UniRule"/>
</dbReference>
<dbReference type="GO" id="GO:0006225">
    <property type="term" value="P:UDP biosynthetic process"/>
    <property type="evidence" value="ECO:0000318"/>
    <property type="project" value="GO_Central"/>
</dbReference>
<dbReference type="CDD" id="cd04254">
    <property type="entry name" value="AAK_UMPK-PyrH-Ec"/>
    <property type="match status" value="1"/>
</dbReference>
<dbReference type="FunFam" id="3.40.1160.10:FF:000001">
    <property type="entry name" value="Uridylate kinase"/>
    <property type="match status" value="1"/>
</dbReference>
<dbReference type="Gene3D" id="3.40.1160.10">
    <property type="entry name" value="Acetylglutamate kinase-like"/>
    <property type="match status" value="1"/>
</dbReference>
<dbReference type="HAMAP" id="MF_01220_B">
    <property type="entry name" value="PyrH_B"/>
    <property type="match status" value="1"/>
</dbReference>
<dbReference type="InterPro" id="IPR036393">
    <property type="entry name" value="AceGlu_kinase-like_sf"/>
</dbReference>
<dbReference type="InterPro" id="IPR001048">
    <property type="entry name" value="Asp/Glu/Uridylate_kinase"/>
</dbReference>
<dbReference type="InterPro" id="IPR011817">
    <property type="entry name" value="Uridylate_kinase"/>
</dbReference>
<dbReference type="InterPro" id="IPR015963">
    <property type="entry name" value="Uridylate_kinase_bac"/>
</dbReference>
<dbReference type="NCBIfam" id="TIGR02075">
    <property type="entry name" value="pyrH_bact"/>
    <property type="match status" value="1"/>
</dbReference>
<dbReference type="PANTHER" id="PTHR42833">
    <property type="entry name" value="URIDYLATE KINASE"/>
    <property type="match status" value="1"/>
</dbReference>
<dbReference type="PANTHER" id="PTHR42833:SF4">
    <property type="entry name" value="URIDYLATE KINASE PUMPKIN, CHLOROPLASTIC"/>
    <property type="match status" value="1"/>
</dbReference>
<dbReference type="Pfam" id="PF00696">
    <property type="entry name" value="AA_kinase"/>
    <property type="match status" value="1"/>
</dbReference>
<dbReference type="PIRSF" id="PIRSF005650">
    <property type="entry name" value="Uridylate_kin"/>
    <property type="match status" value="1"/>
</dbReference>
<dbReference type="SUPFAM" id="SSF53633">
    <property type="entry name" value="Carbamate kinase-like"/>
    <property type="match status" value="1"/>
</dbReference>
<reference key="1">
    <citation type="journal article" date="2003" name="Nature">
        <title>Unique physiological and pathogenic features of Leptospira interrogans revealed by whole-genome sequencing.</title>
        <authorList>
            <person name="Ren S.-X."/>
            <person name="Fu G."/>
            <person name="Jiang X.-G."/>
            <person name="Zeng R."/>
            <person name="Miao Y.-G."/>
            <person name="Xu H."/>
            <person name="Zhang Y.-X."/>
            <person name="Xiong H."/>
            <person name="Lu G."/>
            <person name="Lu L.-F."/>
            <person name="Jiang H.-Q."/>
            <person name="Jia J."/>
            <person name="Tu Y.-F."/>
            <person name="Jiang J.-X."/>
            <person name="Gu W.-Y."/>
            <person name="Zhang Y.-Q."/>
            <person name="Cai Z."/>
            <person name="Sheng H.-H."/>
            <person name="Yin H.-F."/>
            <person name="Zhang Y."/>
            <person name="Zhu G.-F."/>
            <person name="Wan M."/>
            <person name="Huang H.-L."/>
            <person name="Qian Z."/>
            <person name="Wang S.-Y."/>
            <person name="Ma W."/>
            <person name="Yao Z.-J."/>
            <person name="Shen Y."/>
            <person name="Qiang B.-Q."/>
            <person name="Xia Q.-C."/>
            <person name="Guo X.-K."/>
            <person name="Danchin A."/>
            <person name="Saint Girons I."/>
            <person name="Somerville R.L."/>
            <person name="Wen Y.-M."/>
            <person name="Shi M.-H."/>
            <person name="Chen Z."/>
            <person name="Xu J.-G."/>
            <person name="Zhao G.-P."/>
        </authorList>
    </citation>
    <scope>NUCLEOTIDE SEQUENCE [LARGE SCALE GENOMIC DNA]</scope>
    <source>
        <strain>56601</strain>
    </source>
</reference>
<gene>
    <name evidence="1" type="primary">pyrH</name>
    <name type="ordered locus">LA_3296</name>
</gene>
<name>PYRH_LEPIN</name>
<comment type="function">
    <text evidence="1">Catalyzes the reversible phosphorylation of UMP to UDP.</text>
</comment>
<comment type="catalytic activity">
    <reaction evidence="1">
        <text>UMP + ATP = UDP + ADP</text>
        <dbReference type="Rhea" id="RHEA:24400"/>
        <dbReference type="ChEBI" id="CHEBI:30616"/>
        <dbReference type="ChEBI" id="CHEBI:57865"/>
        <dbReference type="ChEBI" id="CHEBI:58223"/>
        <dbReference type="ChEBI" id="CHEBI:456216"/>
        <dbReference type="EC" id="2.7.4.22"/>
    </reaction>
</comment>
<comment type="activity regulation">
    <text evidence="1">Inhibited by UTP.</text>
</comment>
<comment type="pathway">
    <text evidence="1">Pyrimidine metabolism; CTP biosynthesis via de novo pathway; UDP from UMP (UMPK route): step 1/1.</text>
</comment>
<comment type="subunit">
    <text evidence="1">Homohexamer.</text>
</comment>
<comment type="subcellular location">
    <subcellularLocation>
        <location evidence="1">Cytoplasm</location>
    </subcellularLocation>
</comment>
<comment type="similarity">
    <text evidence="1">Belongs to the UMP kinase family.</text>
</comment>
<evidence type="ECO:0000255" key="1">
    <source>
        <dbReference type="HAMAP-Rule" id="MF_01220"/>
    </source>
</evidence>